<comment type="subcellular location">
    <subcellularLocation>
        <location evidence="1">Secreted</location>
    </subcellularLocation>
</comment>
<comment type="tissue specificity">
    <text>Expressed by the venom duct.</text>
</comment>
<comment type="domain">
    <text>The cysteine framework is VI/VII (C-C-CC-C-C).</text>
</comment>
<comment type="domain">
    <text evidence="1">The presence of a 'disulfide through disulfide knot' structurally defines this protein as a knottin.</text>
</comment>
<comment type="similarity">
    <text evidence="3">Belongs to the conotoxin I1 superfamily.</text>
</comment>
<feature type="signal peptide" evidence="2">
    <location>
        <begin position="1"/>
        <end position="19"/>
    </location>
</feature>
<feature type="propeptide" id="PRO_0000415003" evidence="1">
    <location>
        <begin position="20"/>
        <end position="37"/>
    </location>
</feature>
<feature type="peptide" id="PRO_0000415004" description="Conotoxin Cl6.15">
    <location>
        <begin position="40"/>
        <end position="77"/>
    </location>
</feature>
<feature type="disulfide bond" evidence="1">
    <location>
        <begin position="49"/>
        <end position="61"/>
    </location>
</feature>
<feature type="disulfide bond" evidence="1">
    <location>
        <begin position="55"/>
        <end position="66"/>
    </location>
</feature>
<feature type="disulfide bond" evidence="1">
    <location>
        <begin position="60"/>
        <end position="75"/>
    </location>
</feature>
<dbReference type="EMBL" id="FJ959147">
    <property type="protein sequence ID" value="ADB93117.1"/>
    <property type="molecule type" value="Genomic_DNA"/>
</dbReference>
<dbReference type="SMR" id="D6C4K5"/>
<dbReference type="ConoServer" id="4031">
    <property type="toxin name" value="Cal6.15 precursor"/>
</dbReference>
<dbReference type="GO" id="GO:0005576">
    <property type="term" value="C:extracellular region"/>
    <property type="evidence" value="ECO:0007669"/>
    <property type="project" value="UniProtKB-SubCell"/>
</dbReference>
<dbReference type="GO" id="GO:0090729">
    <property type="term" value="F:toxin activity"/>
    <property type="evidence" value="ECO:0007669"/>
    <property type="project" value="UniProtKB-KW"/>
</dbReference>
<reference key="1">
    <citation type="journal article" date="2010" name="Mol. Phylogenet. Evol.">
        <title>Evolution of Conus peptide toxins: analysis of Conus californicus Reeve, 1844.</title>
        <authorList>
            <person name="Biggs J.S."/>
            <person name="Watkins M."/>
            <person name="Puillandre N."/>
            <person name="Ownby J.P."/>
            <person name="Lopez-Vera E."/>
            <person name="Christensen S."/>
            <person name="Moreno K.J."/>
            <person name="Bernaldez J."/>
            <person name="Licea-Navarro A."/>
            <person name="Corneli P.S."/>
            <person name="Olivera B.M."/>
        </authorList>
    </citation>
    <scope>NUCLEOTIDE SEQUENCE [GENOMIC DNA]</scope>
</reference>
<keyword id="KW-0165">Cleavage on pair of basic residues</keyword>
<keyword id="KW-1015">Disulfide bond</keyword>
<keyword id="KW-0960">Knottin</keyword>
<keyword id="KW-0528">Neurotoxin</keyword>
<keyword id="KW-0964">Secreted</keyword>
<keyword id="KW-0732">Signal</keyword>
<keyword id="KW-0800">Toxin</keyword>
<evidence type="ECO:0000250" key="1"/>
<evidence type="ECO:0000255" key="2"/>
<evidence type="ECO:0000305" key="3"/>
<accession>D6C4K5</accession>
<protein>
    <recommendedName>
        <fullName>Conotoxin Cl6.15</fullName>
    </recommendedName>
</protein>
<organism>
    <name type="scientific">Californiconus californicus</name>
    <name type="common">California cone</name>
    <name type="synonym">Conus californicus</name>
    <dbReference type="NCBI Taxonomy" id="1736779"/>
    <lineage>
        <taxon>Eukaryota</taxon>
        <taxon>Metazoa</taxon>
        <taxon>Spiralia</taxon>
        <taxon>Lophotrochozoa</taxon>
        <taxon>Mollusca</taxon>
        <taxon>Gastropoda</taxon>
        <taxon>Caenogastropoda</taxon>
        <taxon>Neogastropoda</taxon>
        <taxon>Conoidea</taxon>
        <taxon>Conidae</taxon>
        <taxon>Californiconus</taxon>
    </lineage>
</organism>
<sequence length="77" mass="8796">MKLSVKFLLFLMILPLIAGEDMSDNDAPKSVDVQRNVKRQGQSQFGEQCTGHLDCFGDLCCFDGYCIMTSWIWPCNW</sequence>
<proteinExistence type="inferred from homology"/>
<name>I16F_CONCL</name>